<sequence>MTLPVNPVDNLAALIRCPSVTPAEGGALTALEKMLKLMGFSANRPVFSDDNTPDIENLYARKSGNGPHLMFAGHTDVVPPGDEKDWKHPPFAAEIEDGVMYGRGAVDMKGGIACFVAAVARHIEKHGNIKGSISFLITGDEEGPAVNGTVKLLEWAKQRGESWDASIVGEPTNPNALGDMIKIGRRGSLSGTITVHGVQGHAAYPHLAENPVRGIVTLVDSLLYPAFDEGTANFQASNLEVTTIDVGNKATNVIPNKATASFNIRFNDTWTAESLQAEIISRLERAARDNRLRQGRETPIKYELTWRERPSHVFLTHDEKLIGTLTASVEAVTGKRPELSTSGGTSDARFIKDYCPVVEFGLTGQTMHMVDERVALADLEGLTQIYERFIADFFG</sequence>
<name>DAPE_BRUA1</name>
<dbReference type="EC" id="3.5.1.18" evidence="1"/>
<dbReference type="EMBL" id="CP000888">
    <property type="protein sequence ID" value="ACD74404.1"/>
    <property type="molecule type" value="Genomic_DNA"/>
</dbReference>
<dbReference type="RefSeq" id="WP_002967376.1">
    <property type="nucleotide sequence ID" value="NC_010740.1"/>
</dbReference>
<dbReference type="SMR" id="B2SC17"/>
<dbReference type="GeneID" id="93015186"/>
<dbReference type="KEGG" id="bmc:BAbS19_II09190"/>
<dbReference type="HOGENOM" id="CLU_021802_4_0_5"/>
<dbReference type="UniPathway" id="UPA00034">
    <property type="reaction ID" value="UER00021"/>
</dbReference>
<dbReference type="Proteomes" id="UP000002565">
    <property type="component" value="Chromosome 2"/>
</dbReference>
<dbReference type="GO" id="GO:0008777">
    <property type="term" value="F:acetylornithine deacetylase activity"/>
    <property type="evidence" value="ECO:0007669"/>
    <property type="project" value="TreeGrafter"/>
</dbReference>
<dbReference type="GO" id="GO:0050897">
    <property type="term" value="F:cobalt ion binding"/>
    <property type="evidence" value="ECO:0007669"/>
    <property type="project" value="UniProtKB-UniRule"/>
</dbReference>
<dbReference type="GO" id="GO:0009014">
    <property type="term" value="F:succinyl-diaminopimelate desuccinylase activity"/>
    <property type="evidence" value="ECO:0007669"/>
    <property type="project" value="UniProtKB-UniRule"/>
</dbReference>
<dbReference type="GO" id="GO:0008270">
    <property type="term" value="F:zinc ion binding"/>
    <property type="evidence" value="ECO:0007669"/>
    <property type="project" value="UniProtKB-UniRule"/>
</dbReference>
<dbReference type="GO" id="GO:0019877">
    <property type="term" value="P:diaminopimelate biosynthetic process"/>
    <property type="evidence" value="ECO:0007669"/>
    <property type="project" value="UniProtKB-UniRule"/>
</dbReference>
<dbReference type="GO" id="GO:0006526">
    <property type="term" value="P:L-arginine biosynthetic process"/>
    <property type="evidence" value="ECO:0007669"/>
    <property type="project" value="TreeGrafter"/>
</dbReference>
<dbReference type="GO" id="GO:0009089">
    <property type="term" value="P:lysine biosynthetic process via diaminopimelate"/>
    <property type="evidence" value="ECO:0007669"/>
    <property type="project" value="UniProtKB-UniRule"/>
</dbReference>
<dbReference type="CDD" id="cd03891">
    <property type="entry name" value="M20_DapE_proteobac"/>
    <property type="match status" value="1"/>
</dbReference>
<dbReference type="Gene3D" id="3.30.70.360">
    <property type="match status" value="1"/>
</dbReference>
<dbReference type="Gene3D" id="3.40.630.10">
    <property type="entry name" value="Zn peptidases"/>
    <property type="match status" value="2"/>
</dbReference>
<dbReference type="HAMAP" id="MF_01690">
    <property type="entry name" value="DapE"/>
    <property type="match status" value="1"/>
</dbReference>
<dbReference type="InterPro" id="IPR001261">
    <property type="entry name" value="ArgE/DapE_CS"/>
</dbReference>
<dbReference type="InterPro" id="IPR036264">
    <property type="entry name" value="Bact_exopeptidase_dim_dom"/>
</dbReference>
<dbReference type="InterPro" id="IPR005941">
    <property type="entry name" value="DapE_proteobac"/>
</dbReference>
<dbReference type="InterPro" id="IPR002933">
    <property type="entry name" value="Peptidase_M20"/>
</dbReference>
<dbReference type="InterPro" id="IPR011650">
    <property type="entry name" value="Peptidase_M20_dimer"/>
</dbReference>
<dbReference type="InterPro" id="IPR050072">
    <property type="entry name" value="Peptidase_M20A"/>
</dbReference>
<dbReference type="NCBIfam" id="TIGR01246">
    <property type="entry name" value="dapE_proteo"/>
    <property type="match status" value="1"/>
</dbReference>
<dbReference type="NCBIfam" id="NF009557">
    <property type="entry name" value="PRK13009.1"/>
    <property type="match status" value="1"/>
</dbReference>
<dbReference type="PANTHER" id="PTHR43808">
    <property type="entry name" value="ACETYLORNITHINE DEACETYLASE"/>
    <property type="match status" value="1"/>
</dbReference>
<dbReference type="PANTHER" id="PTHR43808:SF31">
    <property type="entry name" value="N-ACETYL-L-CITRULLINE DEACETYLASE"/>
    <property type="match status" value="1"/>
</dbReference>
<dbReference type="Pfam" id="PF07687">
    <property type="entry name" value="M20_dimer"/>
    <property type="match status" value="1"/>
</dbReference>
<dbReference type="Pfam" id="PF01546">
    <property type="entry name" value="Peptidase_M20"/>
    <property type="match status" value="1"/>
</dbReference>
<dbReference type="SUPFAM" id="SSF55031">
    <property type="entry name" value="Bacterial exopeptidase dimerisation domain"/>
    <property type="match status" value="1"/>
</dbReference>
<dbReference type="SUPFAM" id="SSF53187">
    <property type="entry name" value="Zn-dependent exopeptidases"/>
    <property type="match status" value="1"/>
</dbReference>
<dbReference type="PROSITE" id="PS00758">
    <property type="entry name" value="ARGE_DAPE_CPG2_1"/>
    <property type="match status" value="1"/>
</dbReference>
<dbReference type="PROSITE" id="PS00759">
    <property type="entry name" value="ARGE_DAPE_CPG2_2"/>
    <property type="match status" value="1"/>
</dbReference>
<evidence type="ECO:0000255" key="1">
    <source>
        <dbReference type="HAMAP-Rule" id="MF_01690"/>
    </source>
</evidence>
<accession>B2SC17</accession>
<protein>
    <recommendedName>
        <fullName evidence="1">Succinyl-diaminopimelate desuccinylase</fullName>
        <shortName evidence="1">SDAP desuccinylase</shortName>
        <ecNumber evidence="1">3.5.1.18</ecNumber>
    </recommendedName>
    <alternativeName>
        <fullName evidence="1">N-succinyl-LL-2,6-diaminoheptanedioate amidohydrolase</fullName>
    </alternativeName>
</protein>
<feature type="chain" id="PRO_0000375486" description="Succinyl-diaminopimelate desuccinylase">
    <location>
        <begin position="1"/>
        <end position="395"/>
    </location>
</feature>
<feature type="active site" evidence="1">
    <location>
        <position position="76"/>
    </location>
</feature>
<feature type="active site" description="Proton acceptor" evidence="1">
    <location>
        <position position="141"/>
    </location>
</feature>
<feature type="binding site" evidence="1">
    <location>
        <position position="74"/>
    </location>
    <ligand>
        <name>Zn(2+)</name>
        <dbReference type="ChEBI" id="CHEBI:29105"/>
        <label>1</label>
    </ligand>
</feature>
<feature type="binding site" evidence="1">
    <location>
        <position position="107"/>
    </location>
    <ligand>
        <name>Zn(2+)</name>
        <dbReference type="ChEBI" id="CHEBI:29105"/>
        <label>1</label>
    </ligand>
</feature>
<feature type="binding site" evidence="1">
    <location>
        <position position="107"/>
    </location>
    <ligand>
        <name>Zn(2+)</name>
        <dbReference type="ChEBI" id="CHEBI:29105"/>
        <label>2</label>
    </ligand>
</feature>
<feature type="binding site" evidence="1">
    <location>
        <position position="142"/>
    </location>
    <ligand>
        <name>Zn(2+)</name>
        <dbReference type="ChEBI" id="CHEBI:29105"/>
        <label>2</label>
    </ligand>
</feature>
<feature type="binding site" evidence="1">
    <location>
        <position position="170"/>
    </location>
    <ligand>
        <name>Zn(2+)</name>
        <dbReference type="ChEBI" id="CHEBI:29105"/>
        <label>1</label>
    </ligand>
</feature>
<feature type="binding site" evidence="1">
    <location>
        <position position="368"/>
    </location>
    <ligand>
        <name>Zn(2+)</name>
        <dbReference type="ChEBI" id="CHEBI:29105"/>
        <label>2</label>
    </ligand>
</feature>
<organism>
    <name type="scientific">Brucella abortus (strain S19)</name>
    <dbReference type="NCBI Taxonomy" id="430066"/>
    <lineage>
        <taxon>Bacteria</taxon>
        <taxon>Pseudomonadati</taxon>
        <taxon>Pseudomonadota</taxon>
        <taxon>Alphaproteobacteria</taxon>
        <taxon>Hyphomicrobiales</taxon>
        <taxon>Brucellaceae</taxon>
        <taxon>Brucella/Ochrobactrum group</taxon>
        <taxon>Brucella</taxon>
    </lineage>
</organism>
<keyword id="KW-0028">Amino-acid biosynthesis</keyword>
<keyword id="KW-0170">Cobalt</keyword>
<keyword id="KW-0220">Diaminopimelate biosynthesis</keyword>
<keyword id="KW-0378">Hydrolase</keyword>
<keyword id="KW-0457">Lysine biosynthesis</keyword>
<keyword id="KW-0479">Metal-binding</keyword>
<keyword id="KW-0862">Zinc</keyword>
<reference key="1">
    <citation type="journal article" date="2008" name="PLoS ONE">
        <title>Genome sequence of Brucella abortus vaccine strain S19 compared to virulent strains yields candidate virulence genes.</title>
        <authorList>
            <person name="Crasta O.R."/>
            <person name="Folkerts O."/>
            <person name="Fei Z."/>
            <person name="Mane S.P."/>
            <person name="Evans C."/>
            <person name="Martino-Catt S."/>
            <person name="Bricker B."/>
            <person name="Yu G."/>
            <person name="Du L."/>
            <person name="Sobral B.W."/>
        </authorList>
    </citation>
    <scope>NUCLEOTIDE SEQUENCE [LARGE SCALE GENOMIC DNA]</scope>
    <source>
        <strain>S19</strain>
    </source>
</reference>
<proteinExistence type="inferred from homology"/>
<gene>
    <name evidence="1" type="primary">dapE</name>
    <name type="ordered locus">BAbS19_II09190</name>
</gene>
<comment type="function">
    <text evidence="1">Catalyzes the hydrolysis of N-succinyl-L,L-diaminopimelic acid (SDAP), forming succinate and LL-2,6-diaminopimelate (DAP), an intermediate involved in the bacterial biosynthesis of lysine and meso-diaminopimelic acid, an essential component of bacterial cell walls.</text>
</comment>
<comment type="catalytic activity">
    <reaction evidence="1">
        <text>N-succinyl-(2S,6S)-2,6-diaminopimelate + H2O = (2S,6S)-2,6-diaminopimelate + succinate</text>
        <dbReference type="Rhea" id="RHEA:22608"/>
        <dbReference type="ChEBI" id="CHEBI:15377"/>
        <dbReference type="ChEBI" id="CHEBI:30031"/>
        <dbReference type="ChEBI" id="CHEBI:57609"/>
        <dbReference type="ChEBI" id="CHEBI:58087"/>
        <dbReference type="EC" id="3.5.1.18"/>
    </reaction>
</comment>
<comment type="cofactor">
    <cofactor evidence="1">
        <name>Zn(2+)</name>
        <dbReference type="ChEBI" id="CHEBI:29105"/>
    </cofactor>
    <cofactor evidence="1">
        <name>Co(2+)</name>
        <dbReference type="ChEBI" id="CHEBI:48828"/>
    </cofactor>
    <text evidence="1">Binds 2 Zn(2+) or Co(2+) ions per subunit.</text>
</comment>
<comment type="pathway">
    <text evidence="1">Amino-acid biosynthesis; L-lysine biosynthesis via DAP pathway; LL-2,6-diaminopimelate from (S)-tetrahydrodipicolinate (succinylase route): step 3/3.</text>
</comment>
<comment type="subunit">
    <text evidence="1">Homodimer.</text>
</comment>
<comment type="similarity">
    <text evidence="1">Belongs to the peptidase M20A family. DapE subfamily.</text>
</comment>